<sequence length="116" mass="12881">MNLITTIITITITLSAVLATISFWLPQISPDAEKLSPYECGFDPLGSARLPFSLRFFLIAILFLLFDLEIALLLPLPWGDQLSTPTLTLIWSTAVLALLTLGLIYEWTQGGLEWAE</sequence>
<proteinExistence type="inferred from homology"/>
<geneLocation type="mitochondrion"/>
<dbReference type="EC" id="7.1.1.2"/>
<dbReference type="EMBL" id="U28365">
    <property type="protein sequence ID" value="AAB05090.1"/>
    <property type="molecule type" value="Genomic_DNA"/>
</dbReference>
<dbReference type="RefSeq" id="YP_006280901.1">
    <property type="nucleotide sequence ID" value="NC_017838.1"/>
</dbReference>
<dbReference type="SMR" id="Q35262"/>
<dbReference type="GeneID" id="12486866"/>
<dbReference type="KEGG" id="oke:12486866"/>
<dbReference type="CTD" id="4537"/>
<dbReference type="OrthoDB" id="154075at2759"/>
<dbReference type="GO" id="GO:0031966">
    <property type="term" value="C:mitochondrial membrane"/>
    <property type="evidence" value="ECO:0007669"/>
    <property type="project" value="UniProtKB-SubCell"/>
</dbReference>
<dbReference type="GO" id="GO:0030964">
    <property type="term" value="C:NADH dehydrogenase complex"/>
    <property type="evidence" value="ECO:0007669"/>
    <property type="project" value="TreeGrafter"/>
</dbReference>
<dbReference type="GO" id="GO:0008137">
    <property type="term" value="F:NADH dehydrogenase (ubiquinone) activity"/>
    <property type="evidence" value="ECO:0007669"/>
    <property type="project" value="UniProtKB-EC"/>
</dbReference>
<dbReference type="FunFam" id="1.20.58.1610:FF:000004">
    <property type="entry name" value="NADH-quinone oxidoreductase subunit A"/>
    <property type="match status" value="1"/>
</dbReference>
<dbReference type="Gene3D" id="1.20.58.1610">
    <property type="entry name" value="NADH:ubiquinone/plastoquinone oxidoreductase, chain 3"/>
    <property type="match status" value="1"/>
</dbReference>
<dbReference type="InterPro" id="IPR000440">
    <property type="entry name" value="NADH_UbQ/plastoQ_OxRdtase_su3"/>
</dbReference>
<dbReference type="InterPro" id="IPR038430">
    <property type="entry name" value="NDAH_ubi_oxred_su3_sf"/>
</dbReference>
<dbReference type="PANTHER" id="PTHR11058">
    <property type="entry name" value="NADH-UBIQUINONE OXIDOREDUCTASE CHAIN 3"/>
    <property type="match status" value="1"/>
</dbReference>
<dbReference type="PANTHER" id="PTHR11058:SF9">
    <property type="entry name" value="NADH-UBIQUINONE OXIDOREDUCTASE CHAIN 3"/>
    <property type="match status" value="1"/>
</dbReference>
<dbReference type="Pfam" id="PF00507">
    <property type="entry name" value="Oxidored_q4"/>
    <property type="match status" value="1"/>
</dbReference>
<organism>
    <name type="scientific">Oncorhynchus keta</name>
    <name type="common">Chum salmon</name>
    <name type="synonym">Salmo keta</name>
    <dbReference type="NCBI Taxonomy" id="8018"/>
    <lineage>
        <taxon>Eukaryota</taxon>
        <taxon>Metazoa</taxon>
        <taxon>Chordata</taxon>
        <taxon>Craniata</taxon>
        <taxon>Vertebrata</taxon>
        <taxon>Euteleostomi</taxon>
        <taxon>Actinopterygii</taxon>
        <taxon>Neopterygii</taxon>
        <taxon>Teleostei</taxon>
        <taxon>Protacanthopterygii</taxon>
        <taxon>Salmoniformes</taxon>
        <taxon>Salmonidae</taxon>
        <taxon>Salmoninae</taxon>
        <taxon>Oncorhynchus</taxon>
    </lineage>
</organism>
<keyword id="KW-0249">Electron transport</keyword>
<keyword id="KW-0472">Membrane</keyword>
<keyword id="KW-0496">Mitochondrion</keyword>
<keyword id="KW-0520">NAD</keyword>
<keyword id="KW-0679">Respiratory chain</keyword>
<keyword id="KW-1278">Translocase</keyword>
<keyword id="KW-0812">Transmembrane</keyword>
<keyword id="KW-1133">Transmembrane helix</keyword>
<keyword id="KW-0813">Transport</keyword>
<keyword id="KW-0830">Ubiquinone</keyword>
<protein>
    <recommendedName>
        <fullName>NADH-ubiquinone oxidoreductase chain 3</fullName>
        <ecNumber>7.1.1.2</ecNumber>
    </recommendedName>
    <alternativeName>
        <fullName>NADH dehydrogenase subunit 3</fullName>
    </alternativeName>
</protein>
<comment type="function">
    <text evidence="1">Core subunit of the mitochondrial membrane respiratory chain NADH dehydrogenase (Complex I) that is believed to belong to the minimal assembly required for catalysis. Complex I functions in the transfer of electrons from NADH to the respiratory chain. The immediate electron acceptor for the enzyme is believed to be ubiquinone (By similarity).</text>
</comment>
<comment type="catalytic activity">
    <reaction>
        <text>a ubiquinone + NADH + 5 H(+)(in) = a ubiquinol + NAD(+) + 4 H(+)(out)</text>
        <dbReference type="Rhea" id="RHEA:29091"/>
        <dbReference type="Rhea" id="RHEA-COMP:9565"/>
        <dbReference type="Rhea" id="RHEA-COMP:9566"/>
        <dbReference type="ChEBI" id="CHEBI:15378"/>
        <dbReference type="ChEBI" id="CHEBI:16389"/>
        <dbReference type="ChEBI" id="CHEBI:17976"/>
        <dbReference type="ChEBI" id="CHEBI:57540"/>
        <dbReference type="ChEBI" id="CHEBI:57945"/>
        <dbReference type="EC" id="7.1.1.2"/>
    </reaction>
</comment>
<comment type="subcellular location">
    <subcellularLocation>
        <location evidence="1">Mitochondrion membrane</location>
        <topology evidence="1">Multi-pass membrane protein</topology>
    </subcellularLocation>
</comment>
<comment type="similarity">
    <text evidence="3">Belongs to the complex I subunit 3 family.</text>
</comment>
<evidence type="ECO:0000250" key="1"/>
<evidence type="ECO:0000255" key="2"/>
<evidence type="ECO:0000305" key="3"/>
<gene>
    <name type="primary">MT-ND3</name>
    <name type="synonym">MTND3</name>
    <name type="synonym">NADH3</name>
    <name type="synonym">ND3</name>
</gene>
<reference key="1">
    <citation type="submission" date="1995-06" db="EMBL/GenBank/DDBJ databases">
        <authorList>
            <person name="McKay S.J."/>
            <person name="Devlin R.H."/>
            <person name="Smith M.J."/>
        </authorList>
    </citation>
    <scope>NUCLEOTIDE SEQUENCE [GENOMIC DNA]</scope>
    <source>
        <strain>Weaver creek</strain>
        <tissue>Liver</tissue>
    </source>
</reference>
<feature type="chain" id="PRO_0000117776" description="NADH-ubiquinone oxidoreductase chain 3">
    <location>
        <begin position="1"/>
        <end position="116"/>
    </location>
</feature>
<feature type="transmembrane region" description="Helical" evidence="2">
    <location>
        <begin position="3"/>
        <end position="23"/>
    </location>
</feature>
<feature type="transmembrane region" description="Helical" evidence="2">
    <location>
        <begin position="56"/>
        <end position="76"/>
    </location>
</feature>
<feature type="transmembrane region" description="Helical" evidence="2">
    <location>
        <begin position="87"/>
        <end position="107"/>
    </location>
</feature>
<name>NU3M_ONCKE</name>
<accession>Q35262</accession>